<comment type="function">
    <text evidence="1">Specifically methylates the N4 position of cytidine in position 1402 (C1402) of 16S rRNA.</text>
</comment>
<comment type="catalytic activity">
    <reaction evidence="1">
        <text>cytidine(1402) in 16S rRNA + S-adenosyl-L-methionine = N(4)-methylcytidine(1402) in 16S rRNA + S-adenosyl-L-homocysteine + H(+)</text>
        <dbReference type="Rhea" id="RHEA:42928"/>
        <dbReference type="Rhea" id="RHEA-COMP:10286"/>
        <dbReference type="Rhea" id="RHEA-COMP:10287"/>
        <dbReference type="ChEBI" id="CHEBI:15378"/>
        <dbReference type="ChEBI" id="CHEBI:57856"/>
        <dbReference type="ChEBI" id="CHEBI:59789"/>
        <dbReference type="ChEBI" id="CHEBI:74506"/>
        <dbReference type="ChEBI" id="CHEBI:82748"/>
        <dbReference type="EC" id="2.1.1.199"/>
    </reaction>
</comment>
<comment type="subcellular location">
    <subcellularLocation>
        <location evidence="1">Cytoplasm</location>
    </subcellularLocation>
</comment>
<comment type="similarity">
    <text evidence="1">Belongs to the methyltransferase superfamily. RsmH family.</text>
</comment>
<feature type="chain" id="PRO_0000386893" description="Ribosomal RNA small subunit methyltransferase H">
    <location>
        <begin position="1"/>
        <end position="294"/>
    </location>
</feature>
<feature type="binding site" evidence="1">
    <location>
        <begin position="37"/>
        <end position="39"/>
    </location>
    <ligand>
        <name>S-adenosyl-L-methionine</name>
        <dbReference type="ChEBI" id="CHEBI:59789"/>
    </ligand>
</feature>
<feature type="binding site" evidence="1">
    <location>
        <position position="58"/>
    </location>
    <ligand>
        <name>S-adenosyl-L-methionine</name>
        <dbReference type="ChEBI" id="CHEBI:59789"/>
    </ligand>
</feature>
<feature type="binding site" evidence="1">
    <location>
        <position position="93"/>
    </location>
    <ligand>
        <name>S-adenosyl-L-methionine</name>
        <dbReference type="ChEBI" id="CHEBI:59789"/>
    </ligand>
</feature>
<feature type="binding site" evidence="1">
    <location>
        <position position="105"/>
    </location>
    <ligand>
        <name>S-adenosyl-L-methionine</name>
        <dbReference type="ChEBI" id="CHEBI:59789"/>
    </ligand>
</feature>
<feature type="binding site" evidence="1">
    <location>
        <position position="112"/>
    </location>
    <ligand>
        <name>S-adenosyl-L-methionine</name>
        <dbReference type="ChEBI" id="CHEBI:59789"/>
    </ligand>
</feature>
<dbReference type="EC" id="2.1.1.199" evidence="1"/>
<dbReference type="EMBL" id="CP000771">
    <property type="protein sequence ID" value="ABS61620.1"/>
    <property type="molecule type" value="Genomic_DNA"/>
</dbReference>
<dbReference type="RefSeq" id="WP_011994911.1">
    <property type="nucleotide sequence ID" value="NC_009718.1"/>
</dbReference>
<dbReference type="SMR" id="A7HNY7"/>
<dbReference type="STRING" id="381764.Fnod_1787"/>
<dbReference type="KEGG" id="fno:Fnod_1787"/>
<dbReference type="eggNOG" id="COG0275">
    <property type="taxonomic scope" value="Bacteria"/>
</dbReference>
<dbReference type="HOGENOM" id="CLU_038422_3_0_0"/>
<dbReference type="OrthoDB" id="9806637at2"/>
<dbReference type="Proteomes" id="UP000002415">
    <property type="component" value="Chromosome"/>
</dbReference>
<dbReference type="GO" id="GO:0005737">
    <property type="term" value="C:cytoplasm"/>
    <property type="evidence" value="ECO:0007669"/>
    <property type="project" value="UniProtKB-SubCell"/>
</dbReference>
<dbReference type="GO" id="GO:0071424">
    <property type="term" value="F:rRNA (cytosine-N4-)-methyltransferase activity"/>
    <property type="evidence" value="ECO:0007669"/>
    <property type="project" value="UniProtKB-UniRule"/>
</dbReference>
<dbReference type="GO" id="GO:0070475">
    <property type="term" value="P:rRNA base methylation"/>
    <property type="evidence" value="ECO:0007669"/>
    <property type="project" value="UniProtKB-UniRule"/>
</dbReference>
<dbReference type="CDD" id="cd02440">
    <property type="entry name" value="AdoMet_MTases"/>
    <property type="match status" value="1"/>
</dbReference>
<dbReference type="FunFam" id="1.10.150.170:FF:000003">
    <property type="entry name" value="Ribosomal RNA small subunit methyltransferase H"/>
    <property type="match status" value="1"/>
</dbReference>
<dbReference type="Gene3D" id="1.10.150.170">
    <property type="entry name" value="Putative methyltransferase TM0872, insert domain"/>
    <property type="match status" value="1"/>
</dbReference>
<dbReference type="Gene3D" id="3.40.50.150">
    <property type="entry name" value="Vaccinia Virus protein VP39"/>
    <property type="match status" value="1"/>
</dbReference>
<dbReference type="HAMAP" id="MF_01007">
    <property type="entry name" value="16SrRNA_methyltr_H"/>
    <property type="match status" value="1"/>
</dbReference>
<dbReference type="InterPro" id="IPR002903">
    <property type="entry name" value="RsmH"/>
</dbReference>
<dbReference type="InterPro" id="IPR023397">
    <property type="entry name" value="SAM-dep_MeTrfase_MraW_recog"/>
</dbReference>
<dbReference type="InterPro" id="IPR029063">
    <property type="entry name" value="SAM-dependent_MTases_sf"/>
</dbReference>
<dbReference type="NCBIfam" id="TIGR00006">
    <property type="entry name" value="16S rRNA (cytosine(1402)-N(4))-methyltransferase RsmH"/>
    <property type="match status" value="1"/>
</dbReference>
<dbReference type="PANTHER" id="PTHR11265:SF0">
    <property type="entry name" value="12S RRNA N4-METHYLCYTIDINE METHYLTRANSFERASE"/>
    <property type="match status" value="1"/>
</dbReference>
<dbReference type="PANTHER" id="PTHR11265">
    <property type="entry name" value="S-ADENOSYL-METHYLTRANSFERASE MRAW"/>
    <property type="match status" value="1"/>
</dbReference>
<dbReference type="Pfam" id="PF01795">
    <property type="entry name" value="Methyltransf_5"/>
    <property type="match status" value="1"/>
</dbReference>
<dbReference type="PIRSF" id="PIRSF004486">
    <property type="entry name" value="MraW"/>
    <property type="match status" value="1"/>
</dbReference>
<dbReference type="SUPFAM" id="SSF81799">
    <property type="entry name" value="Putative methyltransferase TM0872, insert domain"/>
    <property type="match status" value="1"/>
</dbReference>
<dbReference type="SUPFAM" id="SSF53335">
    <property type="entry name" value="S-adenosyl-L-methionine-dependent methyltransferases"/>
    <property type="match status" value="1"/>
</dbReference>
<protein>
    <recommendedName>
        <fullName evidence="1">Ribosomal RNA small subunit methyltransferase H</fullName>
        <ecNumber evidence="1">2.1.1.199</ecNumber>
    </recommendedName>
    <alternativeName>
        <fullName evidence="1">16S rRNA m(4)C1402 methyltransferase</fullName>
    </alternativeName>
    <alternativeName>
        <fullName evidence="1">rRNA (cytosine-N(4)-)-methyltransferase RsmH</fullName>
    </alternativeName>
</protein>
<accession>A7HNY7</accession>
<sequence>MNRVYNDHHIPVLLNEVVENLIWKPDGVYVDCTVGEGGHTRAIAERVLPYGGRVIGIDVDSEVLQIAEHNLLSYPNVQLFKFSYVELPVLLSLLQVHKVDGLLVDLGVSTYQLKAEGRGFSFNQDEPLDMRMNLENNLTAYHIVNTYPEEKLADIIYNYGEENFSRRIARAIVQNRPIQTTRQLVEVIKRALPYKEVHNRKRHFATKTFQAIRIEVNKEIENISKFLEFAPDYLNSGGRLAIISFHSLEDRIVKHVFKNDKRLKPIGDFISPTTFEVAENPRARSAKLRLAERV</sequence>
<keyword id="KW-0963">Cytoplasm</keyword>
<keyword id="KW-0489">Methyltransferase</keyword>
<keyword id="KW-1185">Reference proteome</keyword>
<keyword id="KW-0698">rRNA processing</keyword>
<keyword id="KW-0949">S-adenosyl-L-methionine</keyword>
<keyword id="KW-0808">Transferase</keyword>
<reference key="1">
    <citation type="submission" date="2007-07" db="EMBL/GenBank/DDBJ databases">
        <title>Complete sequence of Fervidobacterium nodosum Rt17-B1.</title>
        <authorList>
            <consortium name="US DOE Joint Genome Institute"/>
            <person name="Copeland A."/>
            <person name="Lucas S."/>
            <person name="Lapidus A."/>
            <person name="Barry K."/>
            <person name="Glavina del Rio T."/>
            <person name="Dalin E."/>
            <person name="Tice H."/>
            <person name="Pitluck S."/>
            <person name="Saunders E."/>
            <person name="Brettin T."/>
            <person name="Bruce D."/>
            <person name="Detter J.C."/>
            <person name="Han C."/>
            <person name="Schmutz J."/>
            <person name="Larimer F."/>
            <person name="Land M."/>
            <person name="Hauser L."/>
            <person name="Kyrpides N."/>
            <person name="Mikhailova N."/>
            <person name="Nelson K."/>
            <person name="Gogarten J.P."/>
            <person name="Noll K."/>
            <person name="Richardson P."/>
        </authorList>
    </citation>
    <scope>NUCLEOTIDE SEQUENCE [LARGE SCALE GENOMIC DNA]</scope>
    <source>
        <strain>ATCC 35602 / DSM 5306 / Rt17-B1</strain>
    </source>
</reference>
<evidence type="ECO:0000255" key="1">
    <source>
        <dbReference type="HAMAP-Rule" id="MF_01007"/>
    </source>
</evidence>
<gene>
    <name evidence="1" type="primary">rsmH</name>
    <name type="synonym">mraW</name>
    <name type="ordered locus">Fnod_1787</name>
</gene>
<name>RSMH_FERNB</name>
<proteinExistence type="inferred from homology"/>
<organism>
    <name type="scientific">Fervidobacterium nodosum (strain ATCC 35602 / DSM 5306 / Rt17-B1)</name>
    <dbReference type="NCBI Taxonomy" id="381764"/>
    <lineage>
        <taxon>Bacteria</taxon>
        <taxon>Thermotogati</taxon>
        <taxon>Thermotogota</taxon>
        <taxon>Thermotogae</taxon>
        <taxon>Thermotogales</taxon>
        <taxon>Fervidobacteriaceae</taxon>
        <taxon>Fervidobacterium</taxon>
    </lineage>
</organism>